<gene>
    <name evidence="1" type="primary">rpoB</name>
    <name type="ordered locus">HAPS_1592</name>
</gene>
<reference key="1">
    <citation type="journal article" date="2009" name="J. Bacteriol.">
        <title>Complete genome sequence of Haemophilus parasuis SH0165.</title>
        <authorList>
            <person name="Yue M."/>
            <person name="Yang F."/>
            <person name="Yang J."/>
            <person name="Bei W."/>
            <person name="Cai X."/>
            <person name="Chen L."/>
            <person name="Dong J."/>
            <person name="Zhou R."/>
            <person name="Jin M."/>
            <person name="Jin Q."/>
            <person name="Chen H."/>
        </authorList>
    </citation>
    <scope>NUCLEOTIDE SEQUENCE [LARGE SCALE GENOMIC DNA]</scope>
    <source>
        <strain>SH0165</strain>
    </source>
</reference>
<keyword id="KW-0240">DNA-directed RNA polymerase</keyword>
<keyword id="KW-0548">Nucleotidyltransferase</keyword>
<keyword id="KW-1185">Reference proteome</keyword>
<keyword id="KW-0804">Transcription</keyword>
<keyword id="KW-0808">Transferase</keyword>
<evidence type="ECO:0000255" key="1">
    <source>
        <dbReference type="HAMAP-Rule" id="MF_01321"/>
    </source>
</evidence>
<organism>
    <name type="scientific">Glaesserella parasuis serovar 5 (strain SH0165)</name>
    <name type="common">Haemophilus parasuis</name>
    <dbReference type="NCBI Taxonomy" id="557723"/>
    <lineage>
        <taxon>Bacteria</taxon>
        <taxon>Pseudomonadati</taxon>
        <taxon>Pseudomonadota</taxon>
        <taxon>Gammaproteobacteria</taxon>
        <taxon>Pasteurellales</taxon>
        <taxon>Pasteurellaceae</taxon>
        <taxon>Glaesserella</taxon>
    </lineage>
</organism>
<comment type="function">
    <text evidence="1">DNA-dependent RNA polymerase catalyzes the transcription of DNA into RNA using the four ribonucleoside triphosphates as substrates.</text>
</comment>
<comment type="catalytic activity">
    <reaction evidence="1">
        <text>RNA(n) + a ribonucleoside 5'-triphosphate = RNA(n+1) + diphosphate</text>
        <dbReference type="Rhea" id="RHEA:21248"/>
        <dbReference type="Rhea" id="RHEA-COMP:14527"/>
        <dbReference type="Rhea" id="RHEA-COMP:17342"/>
        <dbReference type="ChEBI" id="CHEBI:33019"/>
        <dbReference type="ChEBI" id="CHEBI:61557"/>
        <dbReference type="ChEBI" id="CHEBI:140395"/>
        <dbReference type="EC" id="2.7.7.6"/>
    </reaction>
</comment>
<comment type="subunit">
    <text evidence="1">The RNAP catalytic core consists of 2 alpha, 1 beta, 1 beta' and 1 omega subunit. When a sigma factor is associated with the core the holoenzyme is formed, which can initiate transcription.</text>
</comment>
<comment type="similarity">
    <text evidence="1">Belongs to the RNA polymerase beta chain family.</text>
</comment>
<name>RPOB_GLAP5</name>
<dbReference type="EC" id="2.7.7.6" evidence="1"/>
<dbReference type="EMBL" id="CP001321">
    <property type="protein sequence ID" value="ACL33143.1"/>
    <property type="molecule type" value="Genomic_DNA"/>
</dbReference>
<dbReference type="RefSeq" id="WP_010787245.1">
    <property type="nucleotide sequence ID" value="NC_011852.1"/>
</dbReference>
<dbReference type="SMR" id="B8F741"/>
<dbReference type="STRING" id="557723.HAPS_1592"/>
<dbReference type="GeneID" id="66617752"/>
<dbReference type="KEGG" id="hap:HAPS_1592"/>
<dbReference type="PATRIC" id="fig|557723.8.peg.1562"/>
<dbReference type="HOGENOM" id="CLU_000524_4_3_6"/>
<dbReference type="Proteomes" id="UP000006743">
    <property type="component" value="Chromosome"/>
</dbReference>
<dbReference type="GO" id="GO:0000428">
    <property type="term" value="C:DNA-directed RNA polymerase complex"/>
    <property type="evidence" value="ECO:0007669"/>
    <property type="project" value="UniProtKB-KW"/>
</dbReference>
<dbReference type="GO" id="GO:0003677">
    <property type="term" value="F:DNA binding"/>
    <property type="evidence" value="ECO:0007669"/>
    <property type="project" value="UniProtKB-UniRule"/>
</dbReference>
<dbReference type="GO" id="GO:0003899">
    <property type="term" value="F:DNA-directed RNA polymerase activity"/>
    <property type="evidence" value="ECO:0007669"/>
    <property type="project" value="UniProtKB-UniRule"/>
</dbReference>
<dbReference type="GO" id="GO:0032549">
    <property type="term" value="F:ribonucleoside binding"/>
    <property type="evidence" value="ECO:0007669"/>
    <property type="project" value="InterPro"/>
</dbReference>
<dbReference type="GO" id="GO:0006351">
    <property type="term" value="P:DNA-templated transcription"/>
    <property type="evidence" value="ECO:0007669"/>
    <property type="project" value="UniProtKB-UniRule"/>
</dbReference>
<dbReference type="CDD" id="cd00653">
    <property type="entry name" value="RNA_pol_B_RPB2"/>
    <property type="match status" value="1"/>
</dbReference>
<dbReference type="FunFam" id="2.40.270.10:FF:000003">
    <property type="entry name" value="DNA-directed RNA polymerase subunit beta"/>
    <property type="match status" value="1"/>
</dbReference>
<dbReference type="FunFam" id="2.40.270.10:FF:000004">
    <property type="entry name" value="DNA-directed RNA polymerase subunit beta"/>
    <property type="match status" value="1"/>
</dbReference>
<dbReference type="FunFam" id="2.40.50.100:FF:000006">
    <property type="entry name" value="DNA-directed RNA polymerase subunit beta"/>
    <property type="match status" value="1"/>
</dbReference>
<dbReference type="FunFam" id="2.40.50.150:FF:000001">
    <property type="entry name" value="DNA-directed RNA polymerase subunit beta"/>
    <property type="match status" value="1"/>
</dbReference>
<dbReference type="FunFam" id="3.90.1100.10:FF:000002">
    <property type="entry name" value="DNA-directed RNA polymerase subunit beta"/>
    <property type="match status" value="1"/>
</dbReference>
<dbReference type="FunFam" id="3.90.1110.10:FF:000001">
    <property type="entry name" value="DNA-directed RNA polymerase subunit beta"/>
    <property type="match status" value="1"/>
</dbReference>
<dbReference type="FunFam" id="3.90.1110.10:FF:000004">
    <property type="entry name" value="DNA-directed RNA polymerase subunit beta"/>
    <property type="match status" value="1"/>
</dbReference>
<dbReference type="FunFam" id="3.90.1800.10:FF:000001">
    <property type="entry name" value="DNA-directed RNA polymerase subunit beta"/>
    <property type="match status" value="1"/>
</dbReference>
<dbReference type="Gene3D" id="2.40.50.100">
    <property type="match status" value="1"/>
</dbReference>
<dbReference type="Gene3D" id="2.40.50.150">
    <property type="match status" value="1"/>
</dbReference>
<dbReference type="Gene3D" id="3.90.1100.10">
    <property type="match status" value="2"/>
</dbReference>
<dbReference type="Gene3D" id="2.30.150.10">
    <property type="entry name" value="DNA-directed RNA polymerase, beta subunit, external 1 domain"/>
    <property type="match status" value="1"/>
</dbReference>
<dbReference type="Gene3D" id="2.40.270.10">
    <property type="entry name" value="DNA-directed RNA polymerase, subunit 2, domain 6"/>
    <property type="match status" value="1"/>
</dbReference>
<dbReference type="Gene3D" id="3.90.1800.10">
    <property type="entry name" value="RNA polymerase alpha subunit dimerisation domain"/>
    <property type="match status" value="1"/>
</dbReference>
<dbReference type="Gene3D" id="3.90.1110.10">
    <property type="entry name" value="RNA polymerase Rpb2, domain 2"/>
    <property type="match status" value="1"/>
</dbReference>
<dbReference type="HAMAP" id="MF_01321">
    <property type="entry name" value="RNApol_bact_RpoB"/>
    <property type="match status" value="1"/>
</dbReference>
<dbReference type="InterPro" id="IPR042107">
    <property type="entry name" value="DNA-dir_RNA_pol_bsu_ext_1_sf"/>
</dbReference>
<dbReference type="InterPro" id="IPR019462">
    <property type="entry name" value="DNA-dir_RNA_pol_bsu_external_1"/>
</dbReference>
<dbReference type="InterPro" id="IPR015712">
    <property type="entry name" value="DNA-dir_RNA_pol_su2"/>
</dbReference>
<dbReference type="InterPro" id="IPR007120">
    <property type="entry name" value="DNA-dir_RNAP_su2_dom"/>
</dbReference>
<dbReference type="InterPro" id="IPR037033">
    <property type="entry name" value="DNA-dir_RNAP_su2_hyb_sf"/>
</dbReference>
<dbReference type="InterPro" id="IPR010243">
    <property type="entry name" value="RNA_pol_bsu_bac"/>
</dbReference>
<dbReference type="InterPro" id="IPR007121">
    <property type="entry name" value="RNA_pol_bsu_CS"/>
</dbReference>
<dbReference type="InterPro" id="IPR007644">
    <property type="entry name" value="RNA_pol_bsu_protrusion"/>
</dbReference>
<dbReference type="InterPro" id="IPR007642">
    <property type="entry name" value="RNA_pol_Rpb2_2"/>
</dbReference>
<dbReference type="InterPro" id="IPR037034">
    <property type="entry name" value="RNA_pol_Rpb2_2_sf"/>
</dbReference>
<dbReference type="InterPro" id="IPR007645">
    <property type="entry name" value="RNA_pol_Rpb2_3"/>
</dbReference>
<dbReference type="InterPro" id="IPR007641">
    <property type="entry name" value="RNA_pol_Rpb2_7"/>
</dbReference>
<dbReference type="InterPro" id="IPR014724">
    <property type="entry name" value="RNA_pol_RPB2_OB-fold"/>
</dbReference>
<dbReference type="NCBIfam" id="NF001616">
    <property type="entry name" value="PRK00405.1"/>
    <property type="match status" value="1"/>
</dbReference>
<dbReference type="NCBIfam" id="TIGR02013">
    <property type="entry name" value="rpoB"/>
    <property type="match status" value="1"/>
</dbReference>
<dbReference type="PANTHER" id="PTHR20856">
    <property type="entry name" value="DNA-DIRECTED RNA POLYMERASE I SUBUNIT 2"/>
    <property type="match status" value="1"/>
</dbReference>
<dbReference type="Pfam" id="PF04563">
    <property type="entry name" value="RNA_pol_Rpb2_1"/>
    <property type="match status" value="1"/>
</dbReference>
<dbReference type="Pfam" id="PF04561">
    <property type="entry name" value="RNA_pol_Rpb2_2"/>
    <property type="match status" value="2"/>
</dbReference>
<dbReference type="Pfam" id="PF04565">
    <property type="entry name" value="RNA_pol_Rpb2_3"/>
    <property type="match status" value="1"/>
</dbReference>
<dbReference type="Pfam" id="PF10385">
    <property type="entry name" value="RNA_pol_Rpb2_45"/>
    <property type="match status" value="1"/>
</dbReference>
<dbReference type="Pfam" id="PF00562">
    <property type="entry name" value="RNA_pol_Rpb2_6"/>
    <property type="match status" value="1"/>
</dbReference>
<dbReference type="Pfam" id="PF04560">
    <property type="entry name" value="RNA_pol_Rpb2_7"/>
    <property type="match status" value="1"/>
</dbReference>
<dbReference type="SUPFAM" id="SSF64484">
    <property type="entry name" value="beta and beta-prime subunits of DNA dependent RNA-polymerase"/>
    <property type="match status" value="1"/>
</dbReference>
<dbReference type="PROSITE" id="PS01166">
    <property type="entry name" value="RNA_POL_BETA"/>
    <property type="match status" value="1"/>
</dbReference>
<feature type="chain" id="PRO_1000165809" description="DNA-directed RNA polymerase subunit beta">
    <location>
        <begin position="1"/>
        <end position="1342"/>
    </location>
</feature>
<proteinExistence type="inferred from homology"/>
<accession>B8F741</accession>
<sequence length="1342" mass="149537">MAYSYSEKKRIRKSFGKRSQVLNVPYLLTIQLDSFDKFIQRDPEGLQGLEAAFRSVFPIVSSNGATELQYVSYELGEPVFDVRECQIRGTTYAAPLRVKLRLVTFDREAAAGTVKDIKEQNVYMGEIPLMTDNGTFVINGTERVIVSQLHRSPGVFFDSDKGKTHASGKVLYNARIIPYRGSWLDFEFDPKDNLYARIDRRRKLPATIILRALGYTTEEILNMFFETATFHIEDNRLLMTLVPERLRGETAAFDIEANGKIYVESGRRITARHIRALEKDNITQIQVPTEYIVGRVTARDYVDLSTGEIVCPANSEIGLETLAALAQAGYNEIEVLFTNDLDYGPYISETLRIDPTYDRLSALVEIYRMMRPGEPPTKEAAEALFDNMFFSTDRYDLSAVGRMKFNRSLDIPEGVGTGILSNDDIIGVMKKLIEIRNGRGEVDDIDHLGNRRIRSVGEMAENQFRIGLVRVERAVRERLSLGDLDGVTPQDLINAKPISAAVKEFFGSSQLSQFMDQNNPLSEVTHKRRISALGSGGLTRERAGFEVRDVHTTHYGRLCPIETPEGPNIGLINSLSVYARTNNYGFLETPFRKVVNGQVTEEIEYLSAIEEGAYVIAQANSNLDENFRFTDTYVTCRGEHGESGLYRPEEIHYMDVSTQQVVSVAAALIPFLEHDDANRALMGANMQRQAVPTLRADKPLVGTGMEKPIALDSGVAVIAKRGGTIQYVDASRIVVKVNEDETVAGEAGIDIYNLIKYTRSNQNTCINQIPCVKLGEPVGRGEILADGPSTDLGELALGQNIRVAFMPWNGYNFEDSMLVSERVVQEDRFTTIHIQELSCVARDTKLGAEEITADIPNVGESALSKLDESGIVYIGAEVKGGDILVGKVTPKGETQLIPEEKLLRAIFGEKASDVKDSSLRVPNGTSGTVIDVQVFTRDGVEKDKRAKDIEEIQLREAKKDLTEELEILEAGLFTRVRNLLLEGGVAQATLDNLAREKWLEQTLDDEAKQNQLEQLAEQHEELRKEFERKLEIKRNKIIQGDDLAPGVLKVVKVYLAVKRQIQPGDKMAGRHGNKGVISKINPVEDMPYDENGQPVEIVLNPLGVPSRMNIGQILETHLGLAARGIGDQIDKMIKQQQEIAKLREYIQKAYDLGHGAQSVDLSTFSDEEVMRLAQNLRKGLPLATPVFDGAHESEIKGLLELGGLPTSGQITLYDGRTGEKFERLVTVGYMYMLKLNHLVDDKMHARSTGSYSLVTQQPLGGKAQLGGQRFGEMEVWALEAYGAAYTLQEMLTVKSDDVNGRTKMYKNIVDGTHYMEPGIPESFNVITKEIRALAIDMELDEA</sequence>
<protein>
    <recommendedName>
        <fullName evidence="1">DNA-directed RNA polymerase subunit beta</fullName>
        <shortName evidence="1">RNAP subunit beta</shortName>
        <ecNumber evidence="1">2.7.7.6</ecNumber>
    </recommendedName>
    <alternativeName>
        <fullName evidence="1">RNA polymerase subunit beta</fullName>
    </alternativeName>
    <alternativeName>
        <fullName evidence="1">Transcriptase subunit beta</fullName>
    </alternativeName>
</protein>